<evidence type="ECO:0000255" key="1">
    <source>
        <dbReference type="HAMAP-Rule" id="MF_01350"/>
    </source>
</evidence>
<reference key="1">
    <citation type="submission" date="2006-03" db="EMBL/GenBank/DDBJ databases">
        <title>Complete sequence of Rhodopseudomonas palustris BisB18.</title>
        <authorList>
            <consortium name="US DOE Joint Genome Institute"/>
            <person name="Copeland A."/>
            <person name="Lucas S."/>
            <person name="Lapidus A."/>
            <person name="Barry K."/>
            <person name="Detter J.C."/>
            <person name="Glavina del Rio T."/>
            <person name="Hammon N."/>
            <person name="Israni S."/>
            <person name="Dalin E."/>
            <person name="Tice H."/>
            <person name="Pitluck S."/>
            <person name="Chain P."/>
            <person name="Malfatti S."/>
            <person name="Shin M."/>
            <person name="Vergez L."/>
            <person name="Schmutz J."/>
            <person name="Larimer F."/>
            <person name="Land M."/>
            <person name="Hauser L."/>
            <person name="Pelletier D.A."/>
            <person name="Kyrpides N."/>
            <person name="Anderson I."/>
            <person name="Oda Y."/>
            <person name="Harwood C.S."/>
            <person name="Richardson P."/>
        </authorList>
    </citation>
    <scope>NUCLEOTIDE SEQUENCE [LARGE SCALE GENOMIC DNA]</scope>
    <source>
        <strain>BisB18</strain>
    </source>
</reference>
<dbReference type="EC" id="7.1.1.-" evidence="1"/>
<dbReference type="EMBL" id="CP000301">
    <property type="protein sequence ID" value="ABD87963.1"/>
    <property type="molecule type" value="Genomic_DNA"/>
</dbReference>
<dbReference type="SMR" id="Q215H3"/>
<dbReference type="STRING" id="316056.RPC_2411"/>
<dbReference type="KEGG" id="rpc:RPC_2411"/>
<dbReference type="eggNOG" id="COG1005">
    <property type="taxonomic scope" value="Bacteria"/>
</dbReference>
<dbReference type="HOGENOM" id="CLU_015134_0_1_5"/>
<dbReference type="OrthoDB" id="9803734at2"/>
<dbReference type="GO" id="GO:0005886">
    <property type="term" value="C:plasma membrane"/>
    <property type="evidence" value="ECO:0007669"/>
    <property type="project" value="UniProtKB-SubCell"/>
</dbReference>
<dbReference type="GO" id="GO:0003954">
    <property type="term" value="F:NADH dehydrogenase activity"/>
    <property type="evidence" value="ECO:0007669"/>
    <property type="project" value="TreeGrafter"/>
</dbReference>
<dbReference type="GO" id="GO:0016655">
    <property type="term" value="F:oxidoreductase activity, acting on NAD(P)H, quinone or similar compound as acceptor"/>
    <property type="evidence" value="ECO:0007669"/>
    <property type="project" value="UniProtKB-UniRule"/>
</dbReference>
<dbReference type="GO" id="GO:0048038">
    <property type="term" value="F:quinone binding"/>
    <property type="evidence" value="ECO:0007669"/>
    <property type="project" value="UniProtKB-KW"/>
</dbReference>
<dbReference type="GO" id="GO:0009060">
    <property type="term" value="P:aerobic respiration"/>
    <property type="evidence" value="ECO:0007669"/>
    <property type="project" value="TreeGrafter"/>
</dbReference>
<dbReference type="HAMAP" id="MF_01350">
    <property type="entry name" value="NDH1_NuoH"/>
    <property type="match status" value="1"/>
</dbReference>
<dbReference type="InterPro" id="IPR001694">
    <property type="entry name" value="NADH_UbQ_OxRdtase_su1/FPO"/>
</dbReference>
<dbReference type="InterPro" id="IPR018086">
    <property type="entry name" value="NADH_UbQ_OxRdtase_su1_CS"/>
</dbReference>
<dbReference type="NCBIfam" id="NF004741">
    <property type="entry name" value="PRK06076.1-2"/>
    <property type="match status" value="1"/>
</dbReference>
<dbReference type="NCBIfam" id="NF004745">
    <property type="entry name" value="PRK06076.1-6"/>
    <property type="match status" value="1"/>
</dbReference>
<dbReference type="PANTHER" id="PTHR11432">
    <property type="entry name" value="NADH DEHYDROGENASE SUBUNIT 1"/>
    <property type="match status" value="1"/>
</dbReference>
<dbReference type="PANTHER" id="PTHR11432:SF3">
    <property type="entry name" value="NADH-UBIQUINONE OXIDOREDUCTASE CHAIN 1"/>
    <property type="match status" value="1"/>
</dbReference>
<dbReference type="Pfam" id="PF00146">
    <property type="entry name" value="NADHdh"/>
    <property type="match status" value="1"/>
</dbReference>
<dbReference type="PROSITE" id="PS00668">
    <property type="entry name" value="COMPLEX1_ND1_2"/>
    <property type="match status" value="1"/>
</dbReference>
<feature type="chain" id="PRO_0000244944" description="NADH-quinone oxidoreductase subunit H 1">
    <location>
        <begin position="1"/>
        <end position="341"/>
    </location>
</feature>
<feature type="transmembrane region" description="Helical" evidence="1">
    <location>
        <begin position="13"/>
        <end position="33"/>
    </location>
</feature>
<feature type="transmembrane region" description="Helical" evidence="1">
    <location>
        <begin position="82"/>
        <end position="102"/>
    </location>
</feature>
<feature type="transmembrane region" description="Helical" evidence="1">
    <location>
        <begin position="115"/>
        <end position="135"/>
    </location>
</feature>
<feature type="transmembrane region" description="Helical" evidence="1">
    <location>
        <begin position="161"/>
        <end position="181"/>
    </location>
</feature>
<feature type="transmembrane region" description="Helical" evidence="1">
    <location>
        <begin position="190"/>
        <end position="210"/>
    </location>
</feature>
<feature type="transmembrane region" description="Helical" evidence="1">
    <location>
        <begin position="248"/>
        <end position="268"/>
    </location>
</feature>
<feature type="transmembrane region" description="Helical" evidence="1">
    <location>
        <begin position="277"/>
        <end position="297"/>
    </location>
</feature>
<feature type="transmembrane region" description="Helical" evidence="1">
    <location>
        <begin position="317"/>
        <end position="337"/>
    </location>
</feature>
<comment type="function">
    <text evidence="1">NDH-1 shuttles electrons from NADH, via FMN and iron-sulfur (Fe-S) centers, to quinones in the respiratory chain. The immediate electron acceptor for the enzyme in this species is believed to be ubiquinone. Couples the redox reaction to proton translocation (for every two electrons transferred, four hydrogen ions are translocated across the cytoplasmic membrane), and thus conserves the redox energy in a proton gradient. This subunit may bind ubiquinone.</text>
</comment>
<comment type="catalytic activity">
    <reaction evidence="1">
        <text>a quinone + NADH + 5 H(+)(in) = a quinol + NAD(+) + 4 H(+)(out)</text>
        <dbReference type="Rhea" id="RHEA:57888"/>
        <dbReference type="ChEBI" id="CHEBI:15378"/>
        <dbReference type="ChEBI" id="CHEBI:24646"/>
        <dbReference type="ChEBI" id="CHEBI:57540"/>
        <dbReference type="ChEBI" id="CHEBI:57945"/>
        <dbReference type="ChEBI" id="CHEBI:132124"/>
    </reaction>
</comment>
<comment type="subunit">
    <text evidence="1">NDH-1 is composed of 14 different subunits. Subunits NuoA, H, J, K, L, M, N constitute the membrane sector of the complex.</text>
</comment>
<comment type="subcellular location">
    <subcellularLocation>
        <location evidence="1">Cell inner membrane</location>
        <topology evidence="1">Multi-pass membrane protein</topology>
    </subcellularLocation>
</comment>
<comment type="similarity">
    <text evidence="1">Belongs to the complex I subunit 1 family.</text>
</comment>
<sequence>MAEFWTSYLWPLLVVIGQSLLLLILLLITIAYILLADRKIWAAVQIRRGPNVVGPWGLLQSFADLLKFVFKEPMIPSGANKGVFLLAPLVSCVLALAAWAVIPVNAGWVIADINVGVLYILAVSSLSVYGIIMAGWSSNSKYPFLAALRSAAQMVSYEVSIGFVIIAVLLCVGSLNLTAIVEAQNTKWGLLGWYWLPLFPVFVIFYVSALAETNRPPFDLVEAESELVAGFMVEYASTPYLLFMLGEYVAITTMCAMGAILFLGGWLPPVPYAPFTWVPGIIWFMLKGFFMFFLFAMAKAIVPRYRYDQLMRLGWKVFLPLSLVMVVIVAGVLQFAGLAPQ</sequence>
<accession>Q215H3</accession>
<gene>
    <name evidence="1" type="primary">nuoH1</name>
    <name type="ordered locus">RPC_2411</name>
</gene>
<name>NUOH1_RHOPB</name>
<proteinExistence type="inferred from homology"/>
<organism>
    <name type="scientific">Rhodopseudomonas palustris (strain BisB18)</name>
    <dbReference type="NCBI Taxonomy" id="316056"/>
    <lineage>
        <taxon>Bacteria</taxon>
        <taxon>Pseudomonadati</taxon>
        <taxon>Pseudomonadota</taxon>
        <taxon>Alphaproteobacteria</taxon>
        <taxon>Hyphomicrobiales</taxon>
        <taxon>Nitrobacteraceae</taxon>
        <taxon>Rhodopseudomonas</taxon>
    </lineage>
</organism>
<keyword id="KW-0997">Cell inner membrane</keyword>
<keyword id="KW-1003">Cell membrane</keyword>
<keyword id="KW-0472">Membrane</keyword>
<keyword id="KW-0520">NAD</keyword>
<keyword id="KW-0874">Quinone</keyword>
<keyword id="KW-1278">Translocase</keyword>
<keyword id="KW-0812">Transmembrane</keyword>
<keyword id="KW-1133">Transmembrane helix</keyword>
<keyword id="KW-0830">Ubiquinone</keyword>
<protein>
    <recommendedName>
        <fullName evidence="1">NADH-quinone oxidoreductase subunit H 1</fullName>
        <ecNumber evidence="1">7.1.1.-</ecNumber>
    </recommendedName>
    <alternativeName>
        <fullName evidence="1">NADH dehydrogenase I subunit H 1</fullName>
    </alternativeName>
    <alternativeName>
        <fullName evidence="1">NDH-1 subunit H 1</fullName>
    </alternativeName>
</protein>